<gene>
    <name evidence="1" type="primary">lptD</name>
    <name type="synonym">imp</name>
    <name type="synonym">ostA</name>
    <name type="ordered locus">Noc_1724</name>
</gene>
<accession>Q3JAF0</accession>
<evidence type="ECO:0000255" key="1">
    <source>
        <dbReference type="HAMAP-Rule" id="MF_01411"/>
    </source>
</evidence>
<organism>
    <name type="scientific">Nitrosococcus oceani (strain ATCC 19707 / BCRC 17464 / JCM 30415 / NCIMB 11848 / C-107)</name>
    <dbReference type="NCBI Taxonomy" id="323261"/>
    <lineage>
        <taxon>Bacteria</taxon>
        <taxon>Pseudomonadati</taxon>
        <taxon>Pseudomonadota</taxon>
        <taxon>Gammaproteobacteria</taxon>
        <taxon>Chromatiales</taxon>
        <taxon>Chromatiaceae</taxon>
        <taxon>Nitrosococcus</taxon>
    </lineage>
</organism>
<sequence length="738" mass="83275">MEHKRNNILLAGLFFLLLGLVSIARAQIPQWEKCGAFVEPASEELLDPEPRGPVNVEADRVESEKNGVSVFSGEVKFRRRGQWLDADEVLYDKPNDTVEAFGDVRYQDATMDVISDSAKVNLEADIGEAENARYFLRDYHARGEAGAVEREGSVKTELRDATFTTCDIGDNAWQLKADRVSLDHKEGVGWARGARLRLWDTTVFYVPFLRFPIDNRRKSGFLVPSGGSSSNSGIGISTPYYWNIAPNMDATITPRYLSDRGPMMEGEVRYLNPSNFGRIRGSFLPHDAKRDDYRGAFSYRHSGSPRPRWFTNLDLNLVSDDRYFEDFGNSLSIASTTVLNNSLDIGYQGNGWNALGRFQGFQTIDRSIPAFARPYQRLPQFLVDGFFPDRFLGLDVDFHGEVVRFDRDAAPPTGGVRLDFWPTVSLPFRTPGTFFTPSIGVRDTRYFLEDAPPGTDSTLSRTLPIVSMDTGAIFERSLTLWGSDLRQTLEPRAYYLYVPFEDQSAFPVFDSAPLDFYFSRLFQPNRFTGADRLNDANQLTLAVTTRLLQSDTGAELLRASIGQIQFFRDRRVTMPGAAKETDSSSLVIAEVAARLAREWSLRGELRFDPHKKQTDLGAAELHYRGDEGGLLNINYRFRRNFLEQLNVSGRYPIADNWSVVGRWYQSIADGRLLELLGGVEYDSCCWAIRLVGRSYITNIEGDRNNSVLVQLELKGLGNLGQNVERLLERSVLGYGQPF</sequence>
<protein>
    <recommendedName>
        <fullName evidence="1">LPS-assembly protein LptD</fullName>
    </recommendedName>
</protein>
<feature type="signal peptide" evidence="1">
    <location>
        <begin position="1"/>
        <end position="26"/>
    </location>
</feature>
<feature type="chain" id="PRO_5000104759" description="LPS-assembly protein LptD">
    <location>
        <begin position="27"/>
        <end position="738"/>
    </location>
</feature>
<name>LPTD_NITOC</name>
<proteinExistence type="inferred from homology"/>
<dbReference type="EMBL" id="CP000127">
    <property type="protein sequence ID" value="ABA58196.1"/>
    <property type="molecule type" value="Genomic_DNA"/>
</dbReference>
<dbReference type="RefSeq" id="WP_002810606.1">
    <property type="nucleotide sequence ID" value="NC_007484.1"/>
</dbReference>
<dbReference type="SMR" id="Q3JAF0"/>
<dbReference type="FunCoup" id="Q3JAF0">
    <property type="interactions" value="131"/>
</dbReference>
<dbReference type="STRING" id="323261.Noc_1724"/>
<dbReference type="KEGG" id="noc:Noc_1724"/>
<dbReference type="eggNOG" id="COG1452">
    <property type="taxonomic scope" value="Bacteria"/>
</dbReference>
<dbReference type="HOGENOM" id="CLU_009039_0_0_6"/>
<dbReference type="InParanoid" id="Q3JAF0"/>
<dbReference type="Proteomes" id="UP000006838">
    <property type="component" value="Chromosome"/>
</dbReference>
<dbReference type="GO" id="GO:0009279">
    <property type="term" value="C:cell outer membrane"/>
    <property type="evidence" value="ECO:0007669"/>
    <property type="project" value="UniProtKB-SubCell"/>
</dbReference>
<dbReference type="GO" id="GO:1990351">
    <property type="term" value="C:transporter complex"/>
    <property type="evidence" value="ECO:0007669"/>
    <property type="project" value="TreeGrafter"/>
</dbReference>
<dbReference type="GO" id="GO:0043165">
    <property type="term" value="P:Gram-negative-bacterium-type cell outer membrane assembly"/>
    <property type="evidence" value="ECO:0007669"/>
    <property type="project" value="UniProtKB-UniRule"/>
</dbReference>
<dbReference type="GO" id="GO:0015920">
    <property type="term" value="P:lipopolysaccharide transport"/>
    <property type="evidence" value="ECO:0007669"/>
    <property type="project" value="InterPro"/>
</dbReference>
<dbReference type="Gene3D" id="2.60.450.10">
    <property type="entry name" value="Lipopolysaccharide (LPS) transport protein A like domain"/>
    <property type="match status" value="1"/>
</dbReference>
<dbReference type="HAMAP" id="MF_01411">
    <property type="entry name" value="LPS_assembly_LptD"/>
    <property type="match status" value="1"/>
</dbReference>
<dbReference type="InterPro" id="IPR020889">
    <property type="entry name" value="LipoPS_assembly_LptD"/>
</dbReference>
<dbReference type="InterPro" id="IPR050218">
    <property type="entry name" value="LptD"/>
</dbReference>
<dbReference type="InterPro" id="IPR045659">
    <property type="entry name" value="LptD_2"/>
</dbReference>
<dbReference type="InterPro" id="IPR007543">
    <property type="entry name" value="LptD_C"/>
</dbReference>
<dbReference type="InterPro" id="IPR005653">
    <property type="entry name" value="OstA-like_N"/>
</dbReference>
<dbReference type="PANTHER" id="PTHR30189">
    <property type="entry name" value="LPS-ASSEMBLY PROTEIN"/>
    <property type="match status" value="1"/>
</dbReference>
<dbReference type="PANTHER" id="PTHR30189:SF1">
    <property type="entry name" value="LPS-ASSEMBLY PROTEIN LPTD"/>
    <property type="match status" value="1"/>
</dbReference>
<dbReference type="Pfam" id="PF04453">
    <property type="entry name" value="LptD"/>
    <property type="match status" value="1"/>
</dbReference>
<dbReference type="Pfam" id="PF19838">
    <property type="entry name" value="LptD_2"/>
    <property type="match status" value="1"/>
</dbReference>
<dbReference type="Pfam" id="PF03968">
    <property type="entry name" value="LptD_N"/>
    <property type="match status" value="1"/>
</dbReference>
<keyword id="KW-0998">Cell outer membrane</keyword>
<keyword id="KW-0472">Membrane</keyword>
<keyword id="KW-1185">Reference proteome</keyword>
<keyword id="KW-0732">Signal</keyword>
<reference key="1">
    <citation type="journal article" date="2006" name="Appl. Environ. Microbiol.">
        <title>Complete genome sequence of the marine, chemolithoautotrophic, ammonia-oxidizing bacterium Nitrosococcus oceani ATCC 19707.</title>
        <authorList>
            <person name="Klotz M.G."/>
            <person name="Arp D.J."/>
            <person name="Chain P.S.G."/>
            <person name="El-Sheikh A.F."/>
            <person name="Hauser L.J."/>
            <person name="Hommes N.G."/>
            <person name="Larimer F.W."/>
            <person name="Malfatti S.A."/>
            <person name="Norton J.M."/>
            <person name="Poret-Peterson A.T."/>
            <person name="Vergez L.M."/>
            <person name="Ward B.B."/>
        </authorList>
    </citation>
    <scope>NUCLEOTIDE SEQUENCE [LARGE SCALE GENOMIC DNA]</scope>
    <source>
        <strain>ATCC 19707 / BCRC 17464 / JCM 30415 / NCIMB 11848 / C-107</strain>
    </source>
</reference>
<comment type="function">
    <text evidence="1">Together with LptE, is involved in the assembly of lipopolysaccharide (LPS) at the surface of the outer membrane.</text>
</comment>
<comment type="subunit">
    <text evidence="1">Component of the lipopolysaccharide transport and assembly complex. Interacts with LptE and LptA.</text>
</comment>
<comment type="subcellular location">
    <subcellularLocation>
        <location evidence="1">Cell outer membrane</location>
    </subcellularLocation>
</comment>
<comment type="similarity">
    <text evidence="1">Belongs to the LptD family.</text>
</comment>